<evidence type="ECO:0000250" key="1"/>
<evidence type="ECO:0000256" key="2">
    <source>
        <dbReference type="SAM" id="MobiDB-lite"/>
    </source>
</evidence>
<evidence type="ECO:0000305" key="3"/>
<proteinExistence type="inferred from homology"/>
<reference key="1">
    <citation type="journal article" date="2005" name="Nature">
        <title>Genomic sequence of the pathogenic and allergenic filamentous fungus Aspergillus fumigatus.</title>
        <authorList>
            <person name="Nierman W.C."/>
            <person name="Pain A."/>
            <person name="Anderson M.J."/>
            <person name="Wortman J.R."/>
            <person name="Kim H.S."/>
            <person name="Arroyo J."/>
            <person name="Berriman M."/>
            <person name="Abe K."/>
            <person name="Archer D.B."/>
            <person name="Bermejo C."/>
            <person name="Bennett J.W."/>
            <person name="Bowyer P."/>
            <person name="Chen D."/>
            <person name="Collins M."/>
            <person name="Coulsen R."/>
            <person name="Davies R."/>
            <person name="Dyer P.S."/>
            <person name="Farman M.L."/>
            <person name="Fedorova N."/>
            <person name="Fedorova N.D."/>
            <person name="Feldblyum T.V."/>
            <person name="Fischer R."/>
            <person name="Fosker N."/>
            <person name="Fraser A."/>
            <person name="Garcia J.L."/>
            <person name="Garcia M.J."/>
            <person name="Goble A."/>
            <person name="Goldman G.H."/>
            <person name="Gomi K."/>
            <person name="Griffith-Jones S."/>
            <person name="Gwilliam R."/>
            <person name="Haas B.J."/>
            <person name="Haas H."/>
            <person name="Harris D.E."/>
            <person name="Horiuchi H."/>
            <person name="Huang J."/>
            <person name="Humphray S."/>
            <person name="Jimenez J."/>
            <person name="Keller N."/>
            <person name="Khouri H."/>
            <person name="Kitamoto K."/>
            <person name="Kobayashi T."/>
            <person name="Konzack S."/>
            <person name="Kulkarni R."/>
            <person name="Kumagai T."/>
            <person name="Lafton A."/>
            <person name="Latge J.-P."/>
            <person name="Li W."/>
            <person name="Lord A."/>
            <person name="Lu C."/>
            <person name="Majoros W.H."/>
            <person name="May G.S."/>
            <person name="Miller B.L."/>
            <person name="Mohamoud Y."/>
            <person name="Molina M."/>
            <person name="Monod M."/>
            <person name="Mouyna I."/>
            <person name="Mulligan S."/>
            <person name="Murphy L.D."/>
            <person name="O'Neil S."/>
            <person name="Paulsen I."/>
            <person name="Penalva M.A."/>
            <person name="Pertea M."/>
            <person name="Price C."/>
            <person name="Pritchard B.L."/>
            <person name="Quail M.A."/>
            <person name="Rabbinowitsch E."/>
            <person name="Rawlins N."/>
            <person name="Rajandream M.A."/>
            <person name="Reichard U."/>
            <person name="Renauld H."/>
            <person name="Robson G.D."/>
            <person name="Rodriguez de Cordoba S."/>
            <person name="Rodriguez-Pena J.M."/>
            <person name="Ronning C.M."/>
            <person name="Rutter S."/>
            <person name="Salzberg S.L."/>
            <person name="Sanchez M."/>
            <person name="Sanchez-Ferrero J.C."/>
            <person name="Saunders D."/>
            <person name="Seeger K."/>
            <person name="Squares R."/>
            <person name="Squares S."/>
            <person name="Takeuchi M."/>
            <person name="Tekaia F."/>
            <person name="Turner G."/>
            <person name="Vazquez de Aldana C.R."/>
            <person name="Weidman J."/>
            <person name="White O."/>
            <person name="Woodward J.R."/>
            <person name="Yu J.-H."/>
            <person name="Fraser C.M."/>
            <person name="Galagan J.E."/>
            <person name="Asai K."/>
            <person name="Machida M."/>
            <person name="Hall N."/>
            <person name="Barrell B.G."/>
            <person name="Denning D.W."/>
        </authorList>
    </citation>
    <scope>NUCLEOTIDE SEQUENCE [LARGE SCALE GENOMIC DNA]</scope>
    <source>
        <strain>ATCC MYA-4609 / CBS 101355 / FGSC A1100 / Af293</strain>
    </source>
</reference>
<keyword id="KW-0256">Endoplasmic reticulum</keyword>
<keyword id="KW-0328">Glycosyltransferase</keyword>
<keyword id="KW-1185">Reference proteome</keyword>
<keyword id="KW-0808">Transferase</keyword>
<feature type="chain" id="PRO_0000215597" description="UDP-N-acetylglucosamine transferase subunit alg13">
    <location>
        <begin position="1"/>
        <end position="197"/>
    </location>
</feature>
<feature type="region of interest" description="Disordered" evidence="2">
    <location>
        <begin position="174"/>
        <end position="197"/>
    </location>
</feature>
<sequence>MLATKVCFVTVGATASFEELVRAALDPSFVTALEENGYSHLLVQYGKNAVIYENFLKQYPPERRPWRRINISGFSFHEHGLGGDFALAQADISKGRSGGLVISHAGSGTILEVLRMGIPLIVVPNPSLQDNHQEELARQLQKQGYVVASHYQNLCQALHQAEQLRARMLRWPPVRGPDQKNQPTLEQVMSDEMGFVD</sequence>
<accession>Q4WQN1</accession>
<gene>
    <name type="primary">alg13</name>
    <name type="ORF">AFUA_4G13400</name>
</gene>
<name>ALG13_ASPFU</name>
<dbReference type="EC" id="2.4.1.141"/>
<dbReference type="EMBL" id="AAHF01000005">
    <property type="protein sequence ID" value="EAL89453.2"/>
    <property type="molecule type" value="Genomic_DNA"/>
</dbReference>
<dbReference type="RefSeq" id="XP_751491.2">
    <property type="nucleotide sequence ID" value="XM_746398.2"/>
</dbReference>
<dbReference type="SMR" id="Q4WQN1"/>
<dbReference type="FunCoup" id="Q4WQN1">
    <property type="interactions" value="319"/>
</dbReference>
<dbReference type="STRING" id="330879.Q4WQN1"/>
<dbReference type="EnsemblFungi" id="EAL89453">
    <property type="protein sequence ID" value="EAL89453"/>
    <property type="gene ID" value="AFUA_4G13400"/>
</dbReference>
<dbReference type="GeneID" id="3509481"/>
<dbReference type="KEGG" id="afm:AFUA_4G13400"/>
<dbReference type="VEuPathDB" id="FungiDB:Afu4g13400"/>
<dbReference type="eggNOG" id="KOG3349">
    <property type="taxonomic scope" value="Eukaryota"/>
</dbReference>
<dbReference type="HOGENOM" id="CLU_085408_2_1_1"/>
<dbReference type="InParanoid" id="Q4WQN1"/>
<dbReference type="OMA" id="QYKFRPN"/>
<dbReference type="OrthoDB" id="20273at2759"/>
<dbReference type="Proteomes" id="UP000002530">
    <property type="component" value="Chromosome 4"/>
</dbReference>
<dbReference type="GO" id="GO:0005783">
    <property type="term" value="C:endoplasmic reticulum"/>
    <property type="evidence" value="ECO:0007669"/>
    <property type="project" value="UniProtKB-SubCell"/>
</dbReference>
<dbReference type="GO" id="GO:0004577">
    <property type="term" value="F:N-acetylglucosaminyldiphosphodolichol N-acetylglucosaminyltransferase activity"/>
    <property type="evidence" value="ECO:0007669"/>
    <property type="project" value="UniProtKB-EC"/>
</dbReference>
<dbReference type="GO" id="GO:0006488">
    <property type="term" value="P:dolichol-linked oligosaccharide biosynthetic process"/>
    <property type="evidence" value="ECO:0007669"/>
    <property type="project" value="InterPro"/>
</dbReference>
<dbReference type="Gene3D" id="3.40.50.2000">
    <property type="entry name" value="Glycogen Phosphorylase B"/>
    <property type="match status" value="1"/>
</dbReference>
<dbReference type="InterPro" id="IPR039042">
    <property type="entry name" value="Alg13-like"/>
</dbReference>
<dbReference type="InterPro" id="IPR007235">
    <property type="entry name" value="Glyco_trans_28_C"/>
</dbReference>
<dbReference type="PANTHER" id="PTHR12867">
    <property type="entry name" value="GLYCOSYL TRANSFERASE-RELATED"/>
    <property type="match status" value="1"/>
</dbReference>
<dbReference type="PANTHER" id="PTHR12867:SF6">
    <property type="entry name" value="N-ACETYLGLUCOSAMINYLDIPHOSPHODOLICHOL N-ACETYLGLUCOSAMINYLTRANSFERASE"/>
    <property type="match status" value="1"/>
</dbReference>
<dbReference type="Pfam" id="PF04101">
    <property type="entry name" value="Glyco_tran_28_C"/>
    <property type="match status" value="1"/>
</dbReference>
<dbReference type="SUPFAM" id="SSF53756">
    <property type="entry name" value="UDP-Glycosyltransferase/glycogen phosphorylase"/>
    <property type="match status" value="1"/>
</dbReference>
<comment type="function">
    <text evidence="1">Involved in protein N-glycosylation. Essential for the second step of the dolichol-linked oligosaccharide pathway (By similarity).</text>
</comment>
<comment type="catalytic activity">
    <reaction>
        <text>an N-acetyl-alpha-D-glucosaminyl-diphospho-di-trans,poly-cis-dolichol + UDP-N-acetyl-alpha-D-glucosamine = an N,N'-diacetylchitobiosyl-diphospho-di-trans,poly-cis-dolichol + UDP + H(+)</text>
        <dbReference type="Rhea" id="RHEA:23380"/>
        <dbReference type="Rhea" id="RHEA-COMP:19507"/>
        <dbReference type="Rhea" id="RHEA-COMP:19510"/>
        <dbReference type="ChEBI" id="CHEBI:15378"/>
        <dbReference type="ChEBI" id="CHEBI:57269"/>
        <dbReference type="ChEBI" id="CHEBI:57705"/>
        <dbReference type="ChEBI" id="CHEBI:58223"/>
        <dbReference type="ChEBI" id="CHEBI:58427"/>
        <dbReference type="EC" id="2.4.1.141"/>
    </reaction>
</comment>
<comment type="subunit">
    <text evidence="1">Heterodimer with alg14 to form a functional enzyme.</text>
</comment>
<comment type="subcellular location">
    <subcellularLocation>
        <location evidence="1">Endoplasmic reticulum</location>
    </subcellularLocation>
</comment>
<comment type="similarity">
    <text evidence="3">Belongs to the glycosyltransferase 28 family.</text>
</comment>
<protein>
    <recommendedName>
        <fullName>UDP-N-acetylglucosamine transferase subunit alg13</fullName>
        <ecNumber>2.4.1.141</ecNumber>
    </recommendedName>
    <alternativeName>
        <fullName>Asparagine-linked glycosylation protein 13</fullName>
    </alternativeName>
</protein>
<organism>
    <name type="scientific">Aspergillus fumigatus (strain ATCC MYA-4609 / CBS 101355 / FGSC A1100 / Af293)</name>
    <name type="common">Neosartorya fumigata</name>
    <dbReference type="NCBI Taxonomy" id="330879"/>
    <lineage>
        <taxon>Eukaryota</taxon>
        <taxon>Fungi</taxon>
        <taxon>Dikarya</taxon>
        <taxon>Ascomycota</taxon>
        <taxon>Pezizomycotina</taxon>
        <taxon>Eurotiomycetes</taxon>
        <taxon>Eurotiomycetidae</taxon>
        <taxon>Eurotiales</taxon>
        <taxon>Aspergillaceae</taxon>
        <taxon>Aspergillus</taxon>
        <taxon>Aspergillus subgen. Fumigati</taxon>
    </lineage>
</organism>